<protein>
    <recommendedName>
        <fullName evidence="6">Meiotic driver cw9</fullName>
    </recommendedName>
</protein>
<dbReference type="EMBL" id="KY926722">
    <property type="protein sequence ID" value="ARQ19037.1"/>
    <property type="molecule type" value="Genomic_DNA"/>
</dbReference>
<dbReference type="SMR" id="A0A1X9Q9F0"/>
<dbReference type="VEuPathDB" id="FungiDB:SPCC970.11c"/>
<dbReference type="GO" id="GO:0072324">
    <property type="term" value="C:ascus epiplasm"/>
    <property type="evidence" value="ECO:0007669"/>
    <property type="project" value="UniProtKB-SubCell"/>
</dbReference>
<dbReference type="GO" id="GO:0005789">
    <property type="term" value="C:endoplasmic reticulum membrane"/>
    <property type="evidence" value="ECO:0007669"/>
    <property type="project" value="UniProtKB-SubCell"/>
</dbReference>
<dbReference type="GO" id="GO:0005774">
    <property type="term" value="C:vacuolar membrane"/>
    <property type="evidence" value="ECO:0007669"/>
    <property type="project" value="UniProtKB-SubCell"/>
</dbReference>
<dbReference type="GO" id="GO:0110134">
    <property type="term" value="P:meiotic drive"/>
    <property type="evidence" value="ECO:0000315"/>
    <property type="project" value="UniProtKB"/>
</dbReference>
<dbReference type="InterPro" id="IPR004982">
    <property type="entry name" value="WTF"/>
</dbReference>
<dbReference type="Pfam" id="PF03303">
    <property type="entry name" value="WTF"/>
    <property type="match status" value="2"/>
</dbReference>
<keyword id="KW-0024">Alternative initiation</keyword>
<keyword id="KW-0963">Cytoplasm</keyword>
<keyword id="KW-0256">Endoplasmic reticulum</keyword>
<keyword id="KW-0472">Membrane</keyword>
<keyword id="KW-0800">Toxin</keyword>
<keyword id="KW-0812">Transmembrane</keyword>
<keyword id="KW-1133">Transmembrane helix</keyword>
<keyword id="KW-0926">Vacuole</keyword>
<reference evidence="8" key="1">
    <citation type="journal article" date="2017" name="Elife">
        <title>A large gene family in fission yeast encodes spore killers that subvert Mendel's law.</title>
        <authorList>
            <person name="Hu W."/>
            <person name="Jiang Z.D."/>
            <person name="Suo F."/>
            <person name="Zheng J.X."/>
            <person name="He W.Z."/>
            <person name="Du L.L."/>
        </authorList>
    </citation>
    <scope>NUCLEOTIDE SEQUENCE [GENOMIC DNA]</scope>
    <scope>FUNCTION</scope>
    <scope>ALTERNATIVE INITIATION (ISOFORMS 1 AND 2)</scope>
    <scope>DISRUPTION PHENOTYPE</scope>
    <source>
        <strain evidence="8">CBS5557</strain>
    </source>
</reference>
<organism evidence="8">
    <name type="scientific">Schizosaccharomyces pombe</name>
    <name type="common">Fission yeast</name>
    <dbReference type="NCBI Taxonomy" id="4896"/>
    <lineage>
        <taxon>Eukaryota</taxon>
        <taxon>Fungi</taxon>
        <taxon>Dikarya</taxon>
        <taxon>Ascomycota</taxon>
        <taxon>Taphrinomycotina</taxon>
        <taxon>Schizosaccharomycetes</taxon>
        <taxon>Schizosaccharomycetales</taxon>
        <taxon>Schizosaccharomycetaceae</taxon>
        <taxon>Schizosaccharomyces</taxon>
    </lineage>
</organism>
<name>WTF9_SCHPM</name>
<comment type="function">
    <text evidence="5">Promotes unequal transmission of alleles from the parental zygote to progeny spores by acting as poison/antidote system where the poison and antidote proteins are produced from the same locus; the poison component is trans-acting and targets all spores within an ascus whereas the antidote component is spore-specific, leading to poisoning of all progeny that do not inherit the allele.</text>
</comment>
<comment type="function">
    <molecule>Isoform 1</molecule>
    <text evidence="1">Localizes isoform 2 to the vacuole thereby facilitating its degradation.</text>
</comment>
<comment type="function">
    <molecule>Isoform 2</molecule>
    <text evidence="1">Forms toxic aggregates that disrupt spore maturation.</text>
</comment>
<comment type="subunit">
    <text evidence="1 2">Homomer (By similarity). Forms protein aggregates (By similarity). The two isoforms can interact with each other and with themselves (By similarity). High sequence similarity is required for their interaction (By similarity).</text>
</comment>
<comment type="subcellular location">
    <molecule>Isoform 1</molecule>
    <subcellularLocation>
        <location evidence="1 3">Spore membrane</location>
        <topology evidence="3">Multi-pass membrane protein</topology>
    </subcellularLocation>
    <subcellularLocation>
        <location evidence="1 3">Vacuole membrane</location>
        <topology evidence="3">Multi-pass membrane protein</topology>
    </subcellularLocation>
    <text evidence="1">Contained within spores expressing the isoform and localizes isoform 2 to the vacuole.</text>
</comment>
<comment type="subcellular location">
    <molecule>Isoform 2</molecule>
    <subcellularLocation>
        <location evidence="1">Ascus epiplasm</location>
    </subcellularLocation>
    <subcellularLocation>
        <location evidence="1">Cytoplasm</location>
    </subcellularLocation>
    <subcellularLocation>
        <location evidence="1 3">Spore membrane</location>
        <topology evidence="3">Multi-pass membrane protein</topology>
    </subcellularLocation>
    <subcellularLocation>
        <location evidence="1 3">Vacuole membrane</location>
        <topology evidence="3">Multi-pass membrane protein</topology>
    </subcellularLocation>
    <subcellularLocation>
        <location evidence="1 3">Endoplasmic reticulum membrane</location>
        <topology evidence="3">Multi-pass membrane protein</topology>
    </subcellularLocation>
    <text evidence="1">Localizes in trans to all spores within an ascus. Localization to the spore vacuole is dependent on isoform 1.</text>
</comment>
<comment type="alternative products">
    <event type="alternative initiation"/>
    <isoform>
        <id>A0A1X9Q9F0-1</id>
        <name>1</name>
        <name evidence="6">Antidote</name>
        <name evidence="7">Suppressor</name>
        <sequence type="displayed"/>
    </isoform>
    <isoform>
        <id>A0A1X9Q9F0-2</id>
        <name>2</name>
        <name evidence="6">Poison</name>
        <sequence type="described" ref="VSP_060933"/>
    </isoform>
</comment>
<comment type="disruption phenotype">
    <text evidence="5">Abnormal spore maturation in presence of cw9-encoded poison (PubMed:28631610). Sensitises cells to cw9-encoded poison; simultaneous disruption of cw27 enhances sensitivity (PubMed:28631610).</text>
</comment>
<comment type="similarity">
    <text evidence="7">Belongs to the WTF family.</text>
</comment>
<evidence type="ECO:0000250" key="1">
    <source>
        <dbReference type="UniProtKB" id="A0A218N034"/>
    </source>
</evidence>
<evidence type="ECO:0000250" key="2">
    <source>
        <dbReference type="UniProtKB" id="O74420"/>
    </source>
</evidence>
<evidence type="ECO:0000255" key="3"/>
<evidence type="ECO:0000256" key="4">
    <source>
        <dbReference type="SAM" id="MobiDB-lite"/>
    </source>
</evidence>
<evidence type="ECO:0000269" key="5">
    <source>
    </source>
</evidence>
<evidence type="ECO:0000303" key="6">
    <source>
    </source>
</evidence>
<evidence type="ECO:0000305" key="7"/>
<evidence type="ECO:0000312" key="8">
    <source>
        <dbReference type="EMBL" id="ARQ19037.1"/>
    </source>
</evidence>
<sequence>MKNKYYPLRSSMDEMSAKNDNEIDLEKGPLPEYNSEDGSTLPPYSDLNNPKQMGQNITKLFNWNKSTTPPDYDENRLPITDEGNNPPNTHRENHSSGTTDNSSPFLIKLLISFTSIILFNAPAVCYLKYKDAFFKNYGAAEWTLFGFWCLVCTLALLFLTYFYETWSKAVKVTIIFLAQCIKVTAVFLAQCVKVTAISLAKCVKVTAVGLYNSREKWVVIIWLLWVVICYTLFLRSKFGNLNLNKALICSTCSISAALLLFLLYVRLPFWTLKHMFSGLFQVLGVQSCVVIVTKGLMHLFDKHIDATGYEIEVSSLFVIGNFLFFYEMECPGALRRMPKSIRNGIASFLEGTGRAIRGANDNNNSIPLEETEAESEV</sequence>
<proteinExistence type="inferred from homology"/>
<gene>
    <name evidence="8" type="primary">cw9</name>
</gene>
<feature type="chain" id="PRO_0000452259" description="Meiotic driver cw9">
    <location>
        <begin position="1"/>
        <end position="377"/>
    </location>
</feature>
<feature type="transmembrane region" description="Helical" evidence="3">
    <location>
        <begin position="105"/>
        <end position="125"/>
    </location>
</feature>
<feature type="transmembrane region" description="Helical" evidence="3">
    <location>
        <begin position="142"/>
        <end position="162"/>
    </location>
</feature>
<feature type="transmembrane region" description="Helical" evidence="3">
    <location>
        <begin position="172"/>
        <end position="192"/>
    </location>
</feature>
<feature type="transmembrane region" description="Helical" evidence="3">
    <location>
        <begin position="218"/>
        <end position="238"/>
    </location>
</feature>
<feature type="transmembrane region" description="Helical" evidence="3">
    <location>
        <begin position="252"/>
        <end position="272"/>
    </location>
</feature>
<feature type="transmembrane region" description="Helical" evidence="3">
    <location>
        <begin position="276"/>
        <end position="296"/>
    </location>
</feature>
<feature type="transmembrane region" description="Helical" evidence="3">
    <location>
        <begin position="306"/>
        <end position="326"/>
    </location>
</feature>
<feature type="region of interest" description="Disordered" evidence="4">
    <location>
        <begin position="1"/>
        <end position="49"/>
    </location>
</feature>
<feature type="region of interest" description="Disordered" evidence="4">
    <location>
        <begin position="64"/>
        <end position="100"/>
    </location>
</feature>
<feature type="compositionally biased region" description="Basic and acidic residues" evidence="4">
    <location>
        <begin position="11"/>
        <end position="29"/>
    </location>
</feature>
<feature type="splice variant" id="VSP_060933" description="In isoform 2." evidence="5">
    <location>
        <begin position="1"/>
        <end position="52"/>
    </location>
</feature>
<accession>A0A1X9Q9F0</accession>